<keyword id="KW-0496">Mitochondrion</keyword>
<keyword id="KW-1185">Reference proteome</keyword>
<reference key="1">
    <citation type="journal article" date="2004" name="Nature">
        <title>Genome evolution in yeasts.</title>
        <authorList>
            <person name="Dujon B."/>
            <person name="Sherman D."/>
            <person name="Fischer G."/>
            <person name="Durrens P."/>
            <person name="Casaregola S."/>
            <person name="Lafontaine I."/>
            <person name="de Montigny J."/>
            <person name="Marck C."/>
            <person name="Neuveglise C."/>
            <person name="Talla E."/>
            <person name="Goffard N."/>
            <person name="Frangeul L."/>
            <person name="Aigle M."/>
            <person name="Anthouard V."/>
            <person name="Babour A."/>
            <person name="Barbe V."/>
            <person name="Barnay S."/>
            <person name="Blanchin S."/>
            <person name="Beckerich J.-M."/>
            <person name="Beyne E."/>
            <person name="Bleykasten C."/>
            <person name="Boisrame A."/>
            <person name="Boyer J."/>
            <person name="Cattolico L."/>
            <person name="Confanioleri F."/>
            <person name="de Daruvar A."/>
            <person name="Despons L."/>
            <person name="Fabre E."/>
            <person name="Fairhead C."/>
            <person name="Ferry-Dumazet H."/>
            <person name="Groppi A."/>
            <person name="Hantraye F."/>
            <person name="Hennequin C."/>
            <person name="Jauniaux N."/>
            <person name="Joyet P."/>
            <person name="Kachouri R."/>
            <person name="Kerrest A."/>
            <person name="Koszul R."/>
            <person name="Lemaire M."/>
            <person name="Lesur I."/>
            <person name="Ma L."/>
            <person name="Muller H."/>
            <person name="Nicaud J.-M."/>
            <person name="Nikolski M."/>
            <person name="Oztas S."/>
            <person name="Ozier-Kalogeropoulos O."/>
            <person name="Pellenz S."/>
            <person name="Potier S."/>
            <person name="Richard G.-F."/>
            <person name="Straub M.-L."/>
            <person name="Suleau A."/>
            <person name="Swennen D."/>
            <person name="Tekaia F."/>
            <person name="Wesolowski-Louvel M."/>
            <person name="Westhof E."/>
            <person name="Wirth B."/>
            <person name="Zeniou-Meyer M."/>
            <person name="Zivanovic Y."/>
            <person name="Bolotin-Fukuhara M."/>
            <person name="Thierry A."/>
            <person name="Bouchier C."/>
            <person name="Caudron B."/>
            <person name="Scarpelli C."/>
            <person name="Gaillardin C."/>
            <person name="Weissenbach J."/>
            <person name="Wincker P."/>
            <person name="Souciet J.-L."/>
        </authorList>
    </citation>
    <scope>NUCLEOTIDE SEQUENCE [LARGE SCALE GENOMIC DNA]</scope>
    <source>
        <strain>ATCC 8585 / CBS 2359 / DSM 70799 / NBRC 1267 / NRRL Y-1140 / WM37</strain>
    </source>
</reference>
<name>TAR1_KLULA</name>
<accession>Q6CQE5</accession>
<accession>Q6CQD9</accession>
<evidence type="ECO:0000256" key="1">
    <source>
        <dbReference type="SAM" id="MobiDB-lite"/>
    </source>
</evidence>
<proteinExistence type="predicted"/>
<organism>
    <name type="scientific">Kluyveromyces lactis (strain ATCC 8585 / CBS 2359 / DSM 70799 / NBRC 1267 / NRRL Y-1140 / WM37)</name>
    <name type="common">Yeast</name>
    <name type="synonym">Candida sphaerica</name>
    <dbReference type="NCBI Taxonomy" id="284590"/>
    <lineage>
        <taxon>Eukaryota</taxon>
        <taxon>Fungi</taxon>
        <taxon>Dikarya</taxon>
        <taxon>Ascomycota</taxon>
        <taxon>Saccharomycotina</taxon>
        <taxon>Saccharomycetes</taxon>
        <taxon>Saccharomycetales</taxon>
        <taxon>Saccharomycetaceae</taxon>
        <taxon>Kluyveromyces</taxon>
    </lineage>
</organism>
<feature type="chain" id="PRO_0000072431" description="Protein TAR1">
    <location>
        <begin position="1"/>
        <end position="109"/>
    </location>
</feature>
<feature type="region of interest" description="Disordered" evidence="1">
    <location>
        <begin position="62"/>
        <end position="109"/>
    </location>
</feature>
<dbReference type="EMBL" id="CR382124">
    <property type="protein sequence ID" value="CAH00940.2"/>
    <property type="molecule type" value="Genomic_DNA"/>
</dbReference>
<dbReference type="EMBL" id="CR382124">
    <property type="protein sequence ID" value="CAH00934.2"/>
    <property type="molecule type" value="Genomic_DNA"/>
</dbReference>
<dbReference type="EMBL" id="CR382124">
    <property type="protein sequence ID" value="CAH00946.1"/>
    <property type="molecule type" value="Genomic_DNA"/>
</dbReference>
<dbReference type="RefSeq" id="XP_453838.2">
    <property type="nucleotide sequence ID" value="XM_453838.2"/>
</dbReference>
<dbReference type="RefSeq" id="XP_453844.2">
    <property type="nucleotide sequence ID" value="XM_453844.2"/>
</dbReference>
<dbReference type="RefSeq" id="XP_453850.1">
    <property type="nucleotide sequence ID" value="XM_453850.1"/>
</dbReference>
<dbReference type="FunCoup" id="Q6CQE5">
    <property type="interactions" value="10"/>
</dbReference>
<dbReference type="PaxDb" id="284590-Q6CQE5"/>
<dbReference type="KEGG" id="kla:KLLA0_D17600g"/>
<dbReference type="KEGG" id="kla:KLLA0_D17732g"/>
<dbReference type="KEGG" id="kla:KLLA0_D17864g"/>
<dbReference type="eggNOG" id="KOG4853">
    <property type="taxonomic scope" value="Eukaryota"/>
</dbReference>
<dbReference type="HOGENOM" id="CLU_159707_0_0_1"/>
<dbReference type="InParanoid" id="Q6CQE5"/>
<dbReference type="Proteomes" id="UP000000598">
    <property type="component" value="Chromosome D"/>
</dbReference>
<dbReference type="GO" id="GO:0005739">
    <property type="term" value="C:mitochondrion"/>
    <property type="evidence" value="ECO:0007669"/>
    <property type="project" value="UniProtKB-SubCell"/>
</dbReference>
<dbReference type="GO" id="GO:0043457">
    <property type="term" value="P:regulation of cellular respiration"/>
    <property type="evidence" value="ECO:0007669"/>
    <property type="project" value="InterPro"/>
</dbReference>
<dbReference type="InterPro" id="IPR044792">
    <property type="entry name" value="TAR1"/>
</dbReference>
<dbReference type="PANTHER" id="PTHR47188">
    <property type="entry name" value="PROTEIN TAR1"/>
    <property type="match status" value="1"/>
</dbReference>
<dbReference type="PANTHER" id="PTHR47188:SF1">
    <property type="entry name" value="PROTEIN TAR1"/>
    <property type="match status" value="1"/>
</dbReference>
<sequence length="109" mass="12683">MSDQMPFPFNNFTYFFTLFSKFFSSFHHCTCSLSVSRQYLALDGIYHPLRAAFPNNSTRRKHFTNNWDPRHTGFSPSMTSCSKEHRQGPATKLPSSNYNSDVEDARFQI</sequence>
<gene>
    <name type="primary">TAR1-A</name>
    <name type="ordered locus">KLLA0D17600g</name>
</gene>
<gene>
    <name type="primary">TAR1-B</name>
    <name type="ordered locus">KLLA0D17732g</name>
</gene>
<gene>
    <name type="primary">TAR1-C</name>
    <name type="ordered locus">KLLA0D17864g</name>
</gene>
<protein>
    <recommendedName>
        <fullName>Protein TAR1</fullName>
    </recommendedName>
</protein>
<comment type="function">
    <text>May be involved in mtDNA stability or mitochondrial gene expression regulation at the post-transcriptional level.</text>
</comment>
<comment type="subcellular location">
    <subcellularLocation>
        <location>Mitochondrion</location>
    </subcellularLocation>
</comment>